<sequence length="647" mass="72961">MNAHVEQLEFQAEARQLLDLMVHSVYSNKDAFLRELISNASDALDKLRIEALRNKDLEVDTSDLHIEIDADKAARTLTVRDNGIGMAREEVVDLIGTLAKSGTAELRAQLREAKNAAASEELIGQFGIGFYSSFMVADKVQLLTRKAGESAATRWESSGEGTYTIESVEDAPQGTSVTLHLKPEDAEDDLHDYTSEWKIRNLVKKYSDFIAWPIRMDVERRTPASQEEGGEGGEETVTIETETLNSMKALWARPKEEVSEQEYKEFYKHVAHAWDDPLEIIAMKAEGTFEYQALLFIPSHAPFDLFDRDAHVGIQLYVKRVFIMGDCDQLMPEYLRFVKGVVDAQDMSLNVSREILQQDRQIKAIRRRLTKKVLSTIKDVQSSRPEDYRTFWTQFGRVLKEGLLSDIDNRETLLGISSFVSTYSEEEPTTLAEYVERMKDGQQQIFYATGETRQQLLKSPHLEAFKAKGYEVLLLTDPVDEVWVGMVPEFDGKPLQSVAKGEVDLSSEEDTSEAEREERQKEFADLLTWLQETLSDHVKEVRLSTRLTESPACLITDAFGMTPALARIYRASGQEVPVGKRILELNPSHPLVTGLRQAHQDRADDAEKSLAETAELLYGTALLAEGGALEDPARFAELLAERLARTL</sequence>
<gene>
    <name evidence="1" type="primary">htpG</name>
    <name type="ordered locus">BQ2027_MB2321C</name>
</gene>
<reference key="1">
    <citation type="journal article" date="2003" name="Proc. Natl. Acad. Sci. U.S.A.">
        <title>The complete genome sequence of Mycobacterium bovis.</title>
        <authorList>
            <person name="Garnier T."/>
            <person name="Eiglmeier K."/>
            <person name="Camus J.-C."/>
            <person name="Medina N."/>
            <person name="Mansoor H."/>
            <person name="Pryor M."/>
            <person name="Duthoy S."/>
            <person name="Grondin S."/>
            <person name="Lacroix C."/>
            <person name="Monsempe C."/>
            <person name="Simon S."/>
            <person name="Harris B."/>
            <person name="Atkin R."/>
            <person name="Doggett J."/>
            <person name="Mayes R."/>
            <person name="Keating L."/>
            <person name="Wheeler P.R."/>
            <person name="Parkhill J."/>
            <person name="Barrell B.G."/>
            <person name="Cole S.T."/>
            <person name="Gordon S.V."/>
            <person name="Hewinson R.G."/>
        </authorList>
    </citation>
    <scope>NUCLEOTIDE SEQUENCE [LARGE SCALE GENOMIC DNA]</scope>
    <source>
        <strain>ATCC BAA-935 / AF2122/97</strain>
    </source>
</reference>
<reference key="2">
    <citation type="journal article" date="2017" name="Genome Announc.">
        <title>Updated reference genome sequence and annotation of Mycobacterium bovis AF2122/97.</title>
        <authorList>
            <person name="Malone K.M."/>
            <person name="Farrell D."/>
            <person name="Stuber T.P."/>
            <person name="Schubert O.T."/>
            <person name="Aebersold R."/>
            <person name="Robbe-Austerman S."/>
            <person name="Gordon S.V."/>
        </authorList>
    </citation>
    <scope>NUCLEOTIDE SEQUENCE [LARGE SCALE GENOMIC DNA]</scope>
    <scope>GENOME REANNOTATION</scope>
    <source>
        <strain>ATCC BAA-935 / AF2122/97</strain>
    </source>
</reference>
<keyword id="KW-0067">ATP-binding</keyword>
<keyword id="KW-0143">Chaperone</keyword>
<keyword id="KW-0963">Cytoplasm</keyword>
<keyword id="KW-0547">Nucleotide-binding</keyword>
<keyword id="KW-1185">Reference proteome</keyword>
<keyword id="KW-0346">Stress response</keyword>
<protein>
    <recommendedName>
        <fullName evidence="1">Chaperone protein HtpG</fullName>
    </recommendedName>
    <alternativeName>
        <fullName evidence="1">Heat shock protein HtpG</fullName>
    </alternativeName>
    <alternativeName>
        <fullName evidence="1">High temperature protein G</fullName>
    </alternativeName>
</protein>
<comment type="function">
    <text evidence="1">Molecular chaperone. Has ATPase activity.</text>
</comment>
<comment type="subunit">
    <text evidence="1">Homodimer.</text>
</comment>
<comment type="subcellular location">
    <subcellularLocation>
        <location evidence="1">Cytoplasm</location>
    </subcellularLocation>
</comment>
<comment type="similarity">
    <text evidence="1">Belongs to the heat shock protein 90 family.</text>
</comment>
<accession>P64412</accession>
<accession>A0A1R3Y0S1</accession>
<accession>Q50667</accession>
<accession>X2BKF3</accession>
<feature type="chain" id="PRO_0000062997" description="Chaperone protein HtpG">
    <location>
        <begin position="1"/>
        <end position="647"/>
    </location>
</feature>
<feature type="region of interest" description="A; substrate-binding" evidence="1">
    <location>
        <begin position="1"/>
        <end position="353"/>
    </location>
</feature>
<feature type="region of interest" description="B" evidence="1">
    <location>
        <begin position="354"/>
        <end position="567"/>
    </location>
</feature>
<feature type="region of interest" description="C" evidence="1">
    <location>
        <begin position="568"/>
        <end position="647"/>
    </location>
</feature>
<dbReference type="EMBL" id="LT708304">
    <property type="protein sequence ID" value="SIU00933.1"/>
    <property type="molecule type" value="Genomic_DNA"/>
</dbReference>
<dbReference type="RefSeq" id="NP_855970.1">
    <property type="nucleotide sequence ID" value="NC_002945.3"/>
</dbReference>
<dbReference type="RefSeq" id="WP_003411855.1">
    <property type="nucleotide sequence ID" value="NC_002945.4"/>
</dbReference>
<dbReference type="SMR" id="P64412"/>
<dbReference type="GeneID" id="45426279"/>
<dbReference type="KEGG" id="mbo:BQ2027_MB2321C"/>
<dbReference type="PATRIC" id="fig|233413.5.peg.2545"/>
<dbReference type="Proteomes" id="UP000001419">
    <property type="component" value="Chromosome"/>
</dbReference>
<dbReference type="GO" id="GO:0005737">
    <property type="term" value="C:cytoplasm"/>
    <property type="evidence" value="ECO:0007669"/>
    <property type="project" value="UniProtKB-SubCell"/>
</dbReference>
<dbReference type="GO" id="GO:0005524">
    <property type="term" value="F:ATP binding"/>
    <property type="evidence" value="ECO:0007669"/>
    <property type="project" value="UniProtKB-UniRule"/>
</dbReference>
<dbReference type="GO" id="GO:0016887">
    <property type="term" value="F:ATP hydrolysis activity"/>
    <property type="evidence" value="ECO:0007669"/>
    <property type="project" value="InterPro"/>
</dbReference>
<dbReference type="GO" id="GO:0140662">
    <property type="term" value="F:ATP-dependent protein folding chaperone"/>
    <property type="evidence" value="ECO:0007669"/>
    <property type="project" value="InterPro"/>
</dbReference>
<dbReference type="GO" id="GO:0051082">
    <property type="term" value="F:unfolded protein binding"/>
    <property type="evidence" value="ECO:0007669"/>
    <property type="project" value="UniProtKB-UniRule"/>
</dbReference>
<dbReference type="CDD" id="cd16927">
    <property type="entry name" value="HATPase_Hsp90-like"/>
    <property type="match status" value="1"/>
</dbReference>
<dbReference type="FunFam" id="1.20.120.790:FF:000006">
    <property type="entry name" value="Chaperone protein HtpG"/>
    <property type="match status" value="1"/>
</dbReference>
<dbReference type="FunFam" id="3.40.50.11260:FF:000005">
    <property type="entry name" value="Heat shock protein 90"/>
    <property type="match status" value="1"/>
</dbReference>
<dbReference type="FunFam" id="3.30.230.80:FF:000002">
    <property type="entry name" value="Molecular chaperone HtpG"/>
    <property type="match status" value="1"/>
</dbReference>
<dbReference type="FunFam" id="3.30.565.10:FF:000009">
    <property type="entry name" value="Molecular chaperone HtpG"/>
    <property type="match status" value="1"/>
</dbReference>
<dbReference type="Gene3D" id="3.30.230.80">
    <property type="match status" value="1"/>
</dbReference>
<dbReference type="Gene3D" id="3.40.50.11260">
    <property type="match status" value="1"/>
</dbReference>
<dbReference type="Gene3D" id="1.20.120.790">
    <property type="entry name" value="Heat shock protein 90, C-terminal domain"/>
    <property type="match status" value="1"/>
</dbReference>
<dbReference type="Gene3D" id="3.30.565.10">
    <property type="entry name" value="Histidine kinase-like ATPase, C-terminal domain"/>
    <property type="match status" value="1"/>
</dbReference>
<dbReference type="HAMAP" id="MF_00505">
    <property type="entry name" value="HSP90"/>
    <property type="match status" value="1"/>
</dbReference>
<dbReference type="InterPro" id="IPR036890">
    <property type="entry name" value="HATPase_C_sf"/>
</dbReference>
<dbReference type="InterPro" id="IPR019805">
    <property type="entry name" value="Heat_shock_protein_90_CS"/>
</dbReference>
<dbReference type="InterPro" id="IPR037196">
    <property type="entry name" value="HSP90_C"/>
</dbReference>
<dbReference type="InterPro" id="IPR001404">
    <property type="entry name" value="Hsp90_fam"/>
</dbReference>
<dbReference type="InterPro" id="IPR020575">
    <property type="entry name" value="Hsp90_N"/>
</dbReference>
<dbReference type="InterPro" id="IPR020568">
    <property type="entry name" value="Ribosomal_Su5_D2-typ_SF"/>
</dbReference>
<dbReference type="NCBIfam" id="NF003555">
    <property type="entry name" value="PRK05218.1"/>
    <property type="match status" value="1"/>
</dbReference>
<dbReference type="PANTHER" id="PTHR11528">
    <property type="entry name" value="HEAT SHOCK PROTEIN 90 FAMILY MEMBER"/>
    <property type="match status" value="1"/>
</dbReference>
<dbReference type="Pfam" id="PF13589">
    <property type="entry name" value="HATPase_c_3"/>
    <property type="match status" value="1"/>
</dbReference>
<dbReference type="Pfam" id="PF00183">
    <property type="entry name" value="HSP90"/>
    <property type="match status" value="1"/>
</dbReference>
<dbReference type="PIRSF" id="PIRSF002583">
    <property type="entry name" value="Hsp90"/>
    <property type="match status" value="1"/>
</dbReference>
<dbReference type="PRINTS" id="PR00775">
    <property type="entry name" value="HEATSHOCK90"/>
</dbReference>
<dbReference type="SMART" id="SM00387">
    <property type="entry name" value="HATPase_c"/>
    <property type="match status" value="1"/>
</dbReference>
<dbReference type="SUPFAM" id="SSF55874">
    <property type="entry name" value="ATPase domain of HSP90 chaperone/DNA topoisomerase II/histidine kinase"/>
    <property type="match status" value="1"/>
</dbReference>
<dbReference type="SUPFAM" id="SSF110942">
    <property type="entry name" value="HSP90 C-terminal domain"/>
    <property type="match status" value="1"/>
</dbReference>
<dbReference type="SUPFAM" id="SSF54211">
    <property type="entry name" value="Ribosomal protein S5 domain 2-like"/>
    <property type="match status" value="1"/>
</dbReference>
<dbReference type="PROSITE" id="PS00298">
    <property type="entry name" value="HSP90"/>
    <property type="match status" value="1"/>
</dbReference>
<proteinExistence type="inferred from homology"/>
<organism>
    <name type="scientific">Mycobacterium bovis (strain ATCC BAA-935 / AF2122/97)</name>
    <dbReference type="NCBI Taxonomy" id="233413"/>
    <lineage>
        <taxon>Bacteria</taxon>
        <taxon>Bacillati</taxon>
        <taxon>Actinomycetota</taxon>
        <taxon>Actinomycetes</taxon>
        <taxon>Mycobacteriales</taxon>
        <taxon>Mycobacteriaceae</taxon>
        <taxon>Mycobacterium</taxon>
        <taxon>Mycobacterium tuberculosis complex</taxon>
    </lineage>
</organism>
<name>HTPG_MYCBO</name>
<evidence type="ECO:0000255" key="1">
    <source>
        <dbReference type="HAMAP-Rule" id="MF_00505"/>
    </source>
</evidence>